<comment type="function">
    <text evidence="1">Activates the small RNA gene sgrS under glucose-phosphate stress conditions as well as yfdZ. Represses its own transcription under both stress and non-stress conditions. Might act as a sensor of the intracellular accumulation of phosphoglucose by binding these molecules in its C-terminal solute-binding domain.</text>
</comment>
<name>SGRR_SALTI</name>
<accession>Q8Z9I4</accession>
<accession>Q7CBU4</accession>
<proteinExistence type="inferred from homology"/>
<keyword id="KW-0010">Activator</keyword>
<keyword id="KW-0238">DNA-binding</keyword>
<keyword id="KW-0678">Repressor</keyword>
<keyword id="KW-0804">Transcription</keyword>
<keyword id="KW-0805">Transcription regulation</keyword>
<protein>
    <recommendedName>
        <fullName evidence="1">HTH-type transcriptional regulator SgrR</fullName>
    </recommendedName>
</protein>
<gene>
    <name evidence="1" type="primary">sgrR</name>
    <name type="ordered locus">STY0127</name>
    <name type="ordered locus">t0113</name>
</gene>
<dbReference type="EMBL" id="AE014613">
    <property type="protein sequence ID" value="AAO67845.1"/>
    <property type="molecule type" value="Genomic_DNA"/>
</dbReference>
<dbReference type="EMBL" id="AL513382">
    <property type="protein sequence ID" value="CAD01266.1"/>
    <property type="molecule type" value="Genomic_DNA"/>
</dbReference>
<dbReference type="RefSeq" id="NP_454721.1">
    <property type="nucleotide sequence ID" value="NC_003198.1"/>
</dbReference>
<dbReference type="RefSeq" id="WP_001139028.1">
    <property type="nucleotide sequence ID" value="NZ_WSUR01000009.1"/>
</dbReference>
<dbReference type="SMR" id="Q8Z9I4"/>
<dbReference type="STRING" id="220341.gene:17584168"/>
<dbReference type="KEGG" id="stt:t0113"/>
<dbReference type="KEGG" id="sty:STY0127"/>
<dbReference type="PATRIC" id="fig|220341.7.peg.127"/>
<dbReference type="eggNOG" id="COG4533">
    <property type="taxonomic scope" value="Bacteria"/>
</dbReference>
<dbReference type="HOGENOM" id="CLU_017028_12_3_6"/>
<dbReference type="OMA" id="WLTWQAE"/>
<dbReference type="OrthoDB" id="5894719at2"/>
<dbReference type="Proteomes" id="UP000000541">
    <property type="component" value="Chromosome"/>
</dbReference>
<dbReference type="Proteomes" id="UP000002670">
    <property type="component" value="Chromosome"/>
</dbReference>
<dbReference type="GO" id="GO:0003677">
    <property type="term" value="F:DNA binding"/>
    <property type="evidence" value="ECO:0007669"/>
    <property type="project" value="UniProtKB-KW"/>
</dbReference>
<dbReference type="GO" id="GO:1904680">
    <property type="term" value="F:peptide transmembrane transporter activity"/>
    <property type="evidence" value="ECO:0007669"/>
    <property type="project" value="TreeGrafter"/>
</dbReference>
<dbReference type="GO" id="GO:0045892">
    <property type="term" value="P:negative regulation of DNA-templated transcription"/>
    <property type="evidence" value="ECO:0007669"/>
    <property type="project" value="UniProtKB-UniRule"/>
</dbReference>
<dbReference type="GO" id="GO:0015833">
    <property type="term" value="P:peptide transport"/>
    <property type="evidence" value="ECO:0007669"/>
    <property type="project" value="TreeGrafter"/>
</dbReference>
<dbReference type="GO" id="GO:0045893">
    <property type="term" value="P:positive regulation of DNA-templated transcription"/>
    <property type="evidence" value="ECO:0007669"/>
    <property type="project" value="UniProtKB-UniRule"/>
</dbReference>
<dbReference type="CDD" id="cd08507">
    <property type="entry name" value="PBP2_SgrR_like"/>
    <property type="match status" value="1"/>
</dbReference>
<dbReference type="FunFam" id="3.40.190.10:FF:000070">
    <property type="entry name" value="HTH-type transcriptional regulator SgrR"/>
    <property type="match status" value="1"/>
</dbReference>
<dbReference type="Gene3D" id="3.40.190.10">
    <property type="entry name" value="Periplasmic binding protein-like II"/>
    <property type="match status" value="1"/>
</dbReference>
<dbReference type="HAMAP" id="MF_01449">
    <property type="entry name" value="HTH_type_SgrR"/>
    <property type="match status" value="1"/>
</dbReference>
<dbReference type="InterPro" id="IPR039424">
    <property type="entry name" value="SBP_5"/>
</dbReference>
<dbReference type="InterPro" id="IPR000914">
    <property type="entry name" value="SBP_5_dom"/>
</dbReference>
<dbReference type="InterPro" id="IPR025370">
    <property type="entry name" value="SgrR_HTH_N"/>
</dbReference>
<dbReference type="InterPro" id="IPR023767">
    <property type="entry name" value="Tscrpt_reg_SgrR"/>
</dbReference>
<dbReference type="InterPro" id="IPR036390">
    <property type="entry name" value="WH_DNA-bd_sf"/>
</dbReference>
<dbReference type="NCBIfam" id="NF010149">
    <property type="entry name" value="PRK13626.1"/>
    <property type="match status" value="1"/>
</dbReference>
<dbReference type="PANTHER" id="PTHR30290:SF72">
    <property type="entry name" value="HTH-TYPE TRANSCRIPTIONAL REGULATOR SGRR"/>
    <property type="match status" value="1"/>
</dbReference>
<dbReference type="PANTHER" id="PTHR30290">
    <property type="entry name" value="PERIPLASMIC BINDING COMPONENT OF ABC TRANSPORTER"/>
    <property type="match status" value="1"/>
</dbReference>
<dbReference type="Pfam" id="PF00496">
    <property type="entry name" value="SBP_bac_5"/>
    <property type="match status" value="1"/>
</dbReference>
<dbReference type="Pfam" id="PF12793">
    <property type="entry name" value="SgrR_N"/>
    <property type="match status" value="1"/>
</dbReference>
<dbReference type="SUPFAM" id="SSF53850">
    <property type="entry name" value="Periplasmic binding protein-like II"/>
    <property type="match status" value="1"/>
</dbReference>
<dbReference type="SUPFAM" id="SSF46785">
    <property type="entry name" value="Winged helix' DNA-binding domain"/>
    <property type="match status" value="1"/>
</dbReference>
<reference key="1">
    <citation type="journal article" date="2001" name="Nature">
        <title>Complete genome sequence of a multiple drug resistant Salmonella enterica serovar Typhi CT18.</title>
        <authorList>
            <person name="Parkhill J."/>
            <person name="Dougan G."/>
            <person name="James K.D."/>
            <person name="Thomson N.R."/>
            <person name="Pickard D."/>
            <person name="Wain J."/>
            <person name="Churcher C.M."/>
            <person name="Mungall K.L."/>
            <person name="Bentley S.D."/>
            <person name="Holden M.T.G."/>
            <person name="Sebaihia M."/>
            <person name="Baker S."/>
            <person name="Basham D."/>
            <person name="Brooks K."/>
            <person name="Chillingworth T."/>
            <person name="Connerton P."/>
            <person name="Cronin A."/>
            <person name="Davis P."/>
            <person name="Davies R.M."/>
            <person name="Dowd L."/>
            <person name="White N."/>
            <person name="Farrar J."/>
            <person name="Feltwell T."/>
            <person name="Hamlin N."/>
            <person name="Haque A."/>
            <person name="Hien T.T."/>
            <person name="Holroyd S."/>
            <person name="Jagels K."/>
            <person name="Krogh A."/>
            <person name="Larsen T.S."/>
            <person name="Leather S."/>
            <person name="Moule S."/>
            <person name="O'Gaora P."/>
            <person name="Parry C."/>
            <person name="Quail M.A."/>
            <person name="Rutherford K.M."/>
            <person name="Simmonds M."/>
            <person name="Skelton J."/>
            <person name="Stevens K."/>
            <person name="Whitehead S."/>
            <person name="Barrell B.G."/>
        </authorList>
    </citation>
    <scope>NUCLEOTIDE SEQUENCE [LARGE SCALE GENOMIC DNA]</scope>
    <source>
        <strain>CT18</strain>
    </source>
</reference>
<reference key="2">
    <citation type="journal article" date="2003" name="J. Bacteriol.">
        <title>Comparative genomics of Salmonella enterica serovar Typhi strains Ty2 and CT18.</title>
        <authorList>
            <person name="Deng W."/>
            <person name="Liou S.-R."/>
            <person name="Plunkett G. III"/>
            <person name="Mayhew G.F."/>
            <person name="Rose D.J."/>
            <person name="Burland V."/>
            <person name="Kodoyianni V."/>
            <person name="Schwartz D.C."/>
            <person name="Blattner F.R."/>
        </authorList>
    </citation>
    <scope>NUCLEOTIDE SEQUENCE [LARGE SCALE GENOMIC DNA]</scope>
    <source>
        <strain>ATCC 700931 / Ty2</strain>
    </source>
</reference>
<organism>
    <name type="scientific">Salmonella typhi</name>
    <dbReference type="NCBI Taxonomy" id="90370"/>
    <lineage>
        <taxon>Bacteria</taxon>
        <taxon>Pseudomonadati</taxon>
        <taxon>Pseudomonadota</taxon>
        <taxon>Gammaproteobacteria</taxon>
        <taxon>Enterobacterales</taxon>
        <taxon>Enterobacteriaceae</taxon>
        <taxon>Salmonella</taxon>
    </lineage>
</organism>
<evidence type="ECO:0000255" key="1">
    <source>
        <dbReference type="HAMAP-Rule" id="MF_01449"/>
    </source>
</evidence>
<feature type="chain" id="PRO_0000309249" description="HTH-type transcriptional regulator SgrR">
    <location>
        <begin position="1"/>
        <end position="552"/>
    </location>
</feature>
<feature type="domain" description="HTH marR-type" evidence="1">
    <location>
        <begin position="1"/>
        <end position="116"/>
    </location>
</feature>
<feature type="DNA-binding region" description="H-T-H motif" evidence="1">
    <location>
        <begin position="26"/>
        <end position="49"/>
    </location>
</feature>
<feature type="region of interest" description="Solute-binding" evidence="1">
    <location>
        <begin position="163"/>
        <end position="493"/>
    </location>
</feature>
<sequence>MPSGRLQQQFIRLWQCCDGKTQDTTLNELADLLNCSRRHMRTLLNTMQARGWLTWEAEVGRGKRSRLTFLYTGLALQQQRAEDLLEQDRIDQLVQLVGDKSAVRQMLISHLGRSFRQGRHILRVLYYRPMHNLLPGTALRRSETHIARQIFSSLTRVNEENGELEADIAHHWQQISPLLWRFYLRPGIHFHHGRELEMEDVIASLTRINTLPLYSHITKIDSPTAWTLDIHLSQPDRWLPWLLGQVPAMILPREWETLANFASHPIGTGPYAVRRNTPNQLKILAFDDYFGYRALIDEVNVWVLPDISEEPACGLMLEGPIQGGEKAIESRLEEGCYYLLFDARTPRGAHPQVREWVSHVLSPTNLLYHADEPLQQLWFPAYGLLPRWHHARPGPGEKPAGLETLTLTFYREHIEHRVIARIMSALLAEHQVHLHIQEIDYDQWHAGEIESDIWLNSANFTLPLDFSLFAHLCEVPLLQNCIPRDWQDDAAQWRAGEMNLANWCQQLLANKAIVPLIHHWLIIQGQRSMRGLRMNTLGWFDFKSAWFAPPDP</sequence>